<dbReference type="EMBL" id="CU329670">
    <property type="protein sequence ID" value="CAB36511.1"/>
    <property type="molecule type" value="Genomic_DNA"/>
</dbReference>
<dbReference type="PIR" id="T37566">
    <property type="entry name" value="T37566"/>
</dbReference>
<dbReference type="SMR" id="O94612"/>
<dbReference type="BioGRID" id="279418">
    <property type="interactions" value="1"/>
</dbReference>
<dbReference type="FunCoup" id="O94612">
    <property type="interactions" value="315"/>
</dbReference>
<dbReference type="STRING" id="284812.O94612"/>
<dbReference type="PaxDb" id="4896-SPAC1296.05c.1"/>
<dbReference type="EnsemblFungi" id="SPAC1296.05c.1">
    <property type="protein sequence ID" value="SPAC1296.05c.1:pep"/>
    <property type="gene ID" value="SPAC1296.05c"/>
</dbReference>
<dbReference type="KEGG" id="spo:2542980"/>
<dbReference type="PomBase" id="SPAC1296.05c"/>
<dbReference type="VEuPathDB" id="FungiDB:SPAC1296.05c"/>
<dbReference type="eggNOG" id="KOG0835">
    <property type="taxonomic scope" value="Eukaryota"/>
</dbReference>
<dbReference type="HOGENOM" id="CLU_022000_3_2_1"/>
<dbReference type="InParanoid" id="O94612"/>
<dbReference type="OMA" id="WEDVWSV"/>
<dbReference type="PhylomeDB" id="O94612"/>
<dbReference type="PRO" id="PR:O94612"/>
<dbReference type="Proteomes" id="UP000002485">
    <property type="component" value="Chromosome I"/>
</dbReference>
<dbReference type="GO" id="GO:0000307">
    <property type="term" value="C:cyclin-dependent protein kinase holoenzyme complex"/>
    <property type="evidence" value="ECO:0000314"/>
    <property type="project" value="PomBase"/>
</dbReference>
<dbReference type="GO" id="GO:0005737">
    <property type="term" value="C:cytoplasm"/>
    <property type="evidence" value="ECO:0007669"/>
    <property type="project" value="UniProtKB-SubCell"/>
</dbReference>
<dbReference type="GO" id="GO:0005634">
    <property type="term" value="C:nucleus"/>
    <property type="evidence" value="ECO:0007005"/>
    <property type="project" value="PomBase"/>
</dbReference>
<dbReference type="GO" id="GO:0016538">
    <property type="term" value="F:cyclin-dependent protein serine/threonine kinase regulator activity"/>
    <property type="evidence" value="ECO:0000318"/>
    <property type="project" value="GO_Central"/>
</dbReference>
<dbReference type="GO" id="GO:2001178">
    <property type="term" value="P:positive regulation of mediator complex assembly"/>
    <property type="evidence" value="ECO:0000314"/>
    <property type="project" value="PomBase"/>
</dbReference>
<dbReference type="GO" id="GO:0045944">
    <property type="term" value="P:positive regulation of transcription by RNA polymerase II"/>
    <property type="evidence" value="ECO:0000318"/>
    <property type="project" value="GO_Central"/>
</dbReference>
<dbReference type="CDD" id="cd20533">
    <property type="entry name" value="CYCLIN_CCNL_rpt2"/>
    <property type="match status" value="1"/>
</dbReference>
<dbReference type="FunFam" id="1.10.472.10:FF:000320">
    <property type="entry name" value="Uncharacterized cyclin-L1-like protein C1296.05c"/>
    <property type="match status" value="1"/>
</dbReference>
<dbReference type="Gene3D" id="1.10.472.10">
    <property type="entry name" value="Cyclin-like"/>
    <property type="match status" value="2"/>
</dbReference>
<dbReference type="InterPro" id="IPR013763">
    <property type="entry name" value="Cyclin-like_dom"/>
</dbReference>
<dbReference type="InterPro" id="IPR036915">
    <property type="entry name" value="Cyclin-like_sf"/>
</dbReference>
<dbReference type="InterPro" id="IPR043198">
    <property type="entry name" value="Cyclin/Ssn8"/>
</dbReference>
<dbReference type="InterPro" id="IPR006671">
    <property type="entry name" value="Cyclin_N"/>
</dbReference>
<dbReference type="PANTHER" id="PTHR10026">
    <property type="entry name" value="CYCLIN"/>
    <property type="match status" value="1"/>
</dbReference>
<dbReference type="Pfam" id="PF00134">
    <property type="entry name" value="Cyclin_N"/>
    <property type="match status" value="1"/>
</dbReference>
<dbReference type="PIRSF" id="PIRSF036580">
    <property type="entry name" value="Cyclin_L"/>
    <property type="match status" value="1"/>
</dbReference>
<dbReference type="SMART" id="SM00385">
    <property type="entry name" value="CYCLIN"/>
    <property type="match status" value="2"/>
</dbReference>
<dbReference type="SUPFAM" id="SSF47954">
    <property type="entry name" value="Cyclin-like"/>
    <property type="match status" value="2"/>
</dbReference>
<accession>O94612</accession>
<protein>
    <recommendedName>
        <fullName>Uncharacterized cyclin-L1-like protein C1296.05c</fullName>
    </recommendedName>
</protein>
<reference key="1">
    <citation type="journal article" date="2002" name="Nature">
        <title>The genome sequence of Schizosaccharomyces pombe.</title>
        <authorList>
            <person name="Wood V."/>
            <person name="Gwilliam R."/>
            <person name="Rajandream M.A."/>
            <person name="Lyne M.H."/>
            <person name="Lyne R."/>
            <person name="Stewart A."/>
            <person name="Sgouros J.G."/>
            <person name="Peat N."/>
            <person name="Hayles J."/>
            <person name="Baker S.G."/>
            <person name="Basham D."/>
            <person name="Bowman S."/>
            <person name="Brooks K."/>
            <person name="Brown D."/>
            <person name="Brown S."/>
            <person name="Chillingworth T."/>
            <person name="Churcher C.M."/>
            <person name="Collins M."/>
            <person name="Connor R."/>
            <person name="Cronin A."/>
            <person name="Davis P."/>
            <person name="Feltwell T."/>
            <person name="Fraser A."/>
            <person name="Gentles S."/>
            <person name="Goble A."/>
            <person name="Hamlin N."/>
            <person name="Harris D.E."/>
            <person name="Hidalgo J."/>
            <person name="Hodgson G."/>
            <person name="Holroyd S."/>
            <person name="Hornsby T."/>
            <person name="Howarth S."/>
            <person name="Huckle E.J."/>
            <person name="Hunt S."/>
            <person name="Jagels K."/>
            <person name="James K.D."/>
            <person name="Jones L."/>
            <person name="Jones M."/>
            <person name="Leather S."/>
            <person name="McDonald S."/>
            <person name="McLean J."/>
            <person name="Mooney P."/>
            <person name="Moule S."/>
            <person name="Mungall K.L."/>
            <person name="Murphy L.D."/>
            <person name="Niblett D."/>
            <person name="Odell C."/>
            <person name="Oliver K."/>
            <person name="O'Neil S."/>
            <person name="Pearson D."/>
            <person name="Quail M.A."/>
            <person name="Rabbinowitsch E."/>
            <person name="Rutherford K.M."/>
            <person name="Rutter S."/>
            <person name="Saunders D."/>
            <person name="Seeger K."/>
            <person name="Sharp S."/>
            <person name="Skelton J."/>
            <person name="Simmonds M.N."/>
            <person name="Squares R."/>
            <person name="Squares S."/>
            <person name="Stevens K."/>
            <person name="Taylor K."/>
            <person name="Taylor R.G."/>
            <person name="Tivey A."/>
            <person name="Walsh S.V."/>
            <person name="Warren T."/>
            <person name="Whitehead S."/>
            <person name="Woodward J.R."/>
            <person name="Volckaert G."/>
            <person name="Aert R."/>
            <person name="Robben J."/>
            <person name="Grymonprez B."/>
            <person name="Weltjens I."/>
            <person name="Vanstreels E."/>
            <person name="Rieger M."/>
            <person name="Schaefer M."/>
            <person name="Mueller-Auer S."/>
            <person name="Gabel C."/>
            <person name="Fuchs M."/>
            <person name="Duesterhoeft A."/>
            <person name="Fritzc C."/>
            <person name="Holzer E."/>
            <person name="Moestl D."/>
            <person name="Hilbert H."/>
            <person name="Borzym K."/>
            <person name="Langer I."/>
            <person name="Beck A."/>
            <person name="Lehrach H."/>
            <person name="Reinhardt R."/>
            <person name="Pohl T.M."/>
            <person name="Eger P."/>
            <person name="Zimmermann W."/>
            <person name="Wedler H."/>
            <person name="Wambutt R."/>
            <person name="Purnelle B."/>
            <person name="Goffeau A."/>
            <person name="Cadieu E."/>
            <person name="Dreano S."/>
            <person name="Gloux S."/>
            <person name="Lelaure V."/>
            <person name="Mottier S."/>
            <person name="Galibert F."/>
            <person name="Aves S.J."/>
            <person name="Xiang Z."/>
            <person name="Hunt C."/>
            <person name="Moore K."/>
            <person name="Hurst S.M."/>
            <person name="Lucas M."/>
            <person name="Rochet M."/>
            <person name="Gaillardin C."/>
            <person name="Tallada V.A."/>
            <person name="Garzon A."/>
            <person name="Thode G."/>
            <person name="Daga R.R."/>
            <person name="Cruzado L."/>
            <person name="Jimenez J."/>
            <person name="Sanchez M."/>
            <person name="del Rey F."/>
            <person name="Benito J."/>
            <person name="Dominguez A."/>
            <person name="Revuelta J.L."/>
            <person name="Moreno S."/>
            <person name="Armstrong J."/>
            <person name="Forsburg S.L."/>
            <person name="Cerutti L."/>
            <person name="Lowe T."/>
            <person name="McCombie W.R."/>
            <person name="Paulsen I."/>
            <person name="Potashkin J."/>
            <person name="Shpakovski G.V."/>
            <person name="Ussery D."/>
            <person name="Barrell B.G."/>
            <person name="Nurse P."/>
        </authorList>
    </citation>
    <scope>NUCLEOTIDE SEQUENCE [LARGE SCALE GENOMIC DNA]</scope>
    <source>
        <strain>972 / ATCC 24843</strain>
    </source>
</reference>
<reference key="2">
    <citation type="journal article" date="2006" name="Nat. Biotechnol.">
        <title>ORFeome cloning and global analysis of protein localization in the fission yeast Schizosaccharomyces pombe.</title>
        <authorList>
            <person name="Matsuyama A."/>
            <person name="Arai R."/>
            <person name="Yashiroda Y."/>
            <person name="Shirai A."/>
            <person name="Kamata A."/>
            <person name="Sekido S."/>
            <person name="Kobayashi Y."/>
            <person name="Hashimoto A."/>
            <person name="Hamamoto M."/>
            <person name="Hiraoka Y."/>
            <person name="Horinouchi S."/>
            <person name="Yoshida M."/>
        </authorList>
    </citation>
    <scope>SUBCELLULAR LOCATION [LARGE SCALE ANALYSIS]</scope>
</reference>
<sequence>MADSLVHSLASSSQLEAFDSFEYAEELCTLGSEWIQEAGVLLNLTQNCVIVCLILFRRYCTLYPPRVPDLDAIVMACVSIGSKTTETPASVQDICNVVVYLKERFKDTNFEARGFIAHDLYSEEMYSSRNRLSNMELEVLRALNFDTHIVIPHKLAIHYLQTLQLIDNKKLLQITWNFLNDASRTRLCVLYPPFSLACGCIAMAARVIGMKLPKDWYRVFDTTKEEIDSLTSILENFYKTSAIAHKTLYLIFTEQVSA</sequence>
<feature type="chain" id="PRO_0000310347" description="Uncharacterized cyclin-L1-like protein C1296.05c">
    <location>
        <begin position="1"/>
        <end position="258"/>
    </location>
</feature>
<feature type="domain" description="Cyclin N-terminal">
    <location>
        <begin position="16"/>
        <end position="148"/>
    </location>
</feature>
<evidence type="ECO:0000269" key="1">
    <source>
    </source>
</evidence>
<evidence type="ECO:0000305" key="2"/>
<keyword id="KW-0195">Cyclin</keyword>
<keyword id="KW-0963">Cytoplasm</keyword>
<keyword id="KW-0539">Nucleus</keyword>
<keyword id="KW-1185">Reference proteome</keyword>
<organism>
    <name type="scientific">Schizosaccharomyces pombe (strain 972 / ATCC 24843)</name>
    <name type="common">Fission yeast</name>
    <dbReference type="NCBI Taxonomy" id="284812"/>
    <lineage>
        <taxon>Eukaryota</taxon>
        <taxon>Fungi</taxon>
        <taxon>Dikarya</taxon>
        <taxon>Ascomycota</taxon>
        <taxon>Taphrinomycotina</taxon>
        <taxon>Schizosaccharomycetes</taxon>
        <taxon>Schizosaccharomycetales</taxon>
        <taxon>Schizosaccharomycetaceae</taxon>
        <taxon>Schizosaccharomyces</taxon>
    </lineage>
</organism>
<gene>
    <name type="ORF">SPAC1296.05c</name>
</gene>
<proteinExistence type="inferred from homology"/>
<comment type="subcellular location">
    <subcellularLocation>
        <location evidence="1">Cytoplasm</location>
    </subcellularLocation>
    <subcellularLocation>
        <location evidence="1">Nucleus</location>
    </subcellularLocation>
</comment>
<comment type="similarity">
    <text evidence="2">Belongs to the cyclin family. Cyclin L subfamily.</text>
</comment>
<name>YFO5_SCHPO</name>